<keyword id="KW-0028">Amino-acid biosynthesis</keyword>
<keyword id="KW-0413">Isomerase</keyword>
<keyword id="KW-0486">Methionine biosynthesis</keyword>
<reference key="1">
    <citation type="journal article" date="2000" name="Nature">
        <title>The genome sequence of the plant pathogen Xylella fastidiosa.</title>
        <authorList>
            <person name="Simpson A.J.G."/>
            <person name="Reinach F.C."/>
            <person name="Arruda P."/>
            <person name="Abreu F.A."/>
            <person name="Acencio M."/>
            <person name="Alvarenga R."/>
            <person name="Alves L.M.C."/>
            <person name="Araya J.E."/>
            <person name="Baia G.S."/>
            <person name="Baptista C.S."/>
            <person name="Barros M.H."/>
            <person name="Bonaccorsi E.D."/>
            <person name="Bordin S."/>
            <person name="Bove J.M."/>
            <person name="Briones M.R.S."/>
            <person name="Bueno M.R.P."/>
            <person name="Camargo A.A."/>
            <person name="Camargo L.E.A."/>
            <person name="Carraro D.M."/>
            <person name="Carrer H."/>
            <person name="Colauto N.B."/>
            <person name="Colombo C."/>
            <person name="Costa F.F."/>
            <person name="Costa M.C.R."/>
            <person name="Costa-Neto C.M."/>
            <person name="Coutinho L.L."/>
            <person name="Cristofani M."/>
            <person name="Dias-Neto E."/>
            <person name="Docena C."/>
            <person name="El-Dorry H."/>
            <person name="Facincani A.P."/>
            <person name="Ferreira A.J.S."/>
            <person name="Ferreira V.C.A."/>
            <person name="Ferro J.A."/>
            <person name="Fraga J.S."/>
            <person name="Franca S.C."/>
            <person name="Franco M.C."/>
            <person name="Frohme M."/>
            <person name="Furlan L.R."/>
            <person name="Garnier M."/>
            <person name="Goldman G.H."/>
            <person name="Goldman M.H.S."/>
            <person name="Gomes S.L."/>
            <person name="Gruber A."/>
            <person name="Ho P.L."/>
            <person name="Hoheisel J.D."/>
            <person name="Junqueira M.L."/>
            <person name="Kemper E.L."/>
            <person name="Kitajima J.P."/>
            <person name="Krieger J.E."/>
            <person name="Kuramae E.E."/>
            <person name="Laigret F."/>
            <person name="Lambais M.R."/>
            <person name="Leite L.C.C."/>
            <person name="Lemos E.G.M."/>
            <person name="Lemos M.V.F."/>
            <person name="Lopes S.A."/>
            <person name="Lopes C.R."/>
            <person name="Machado J.A."/>
            <person name="Machado M.A."/>
            <person name="Madeira A.M.B.N."/>
            <person name="Madeira H.M.F."/>
            <person name="Marino C.L."/>
            <person name="Marques M.V."/>
            <person name="Martins E.A.L."/>
            <person name="Martins E.M.F."/>
            <person name="Matsukuma A.Y."/>
            <person name="Menck C.F.M."/>
            <person name="Miracca E.C."/>
            <person name="Miyaki C.Y."/>
            <person name="Monteiro-Vitorello C.B."/>
            <person name="Moon D.H."/>
            <person name="Nagai M.A."/>
            <person name="Nascimento A.L.T.O."/>
            <person name="Netto L.E.S."/>
            <person name="Nhani A. Jr."/>
            <person name="Nobrega F.G."/>
            <person name="Nunes L.R."/>
            <person name="Oliveira M.A."/>
            <person name="de Oliveira M.C."/>
            <person name="de Oliveira R.C."/>
            <person name="Palmieri D.A."/>
            <person name="Paris A."/>
            <person name="Peixoto B.R."/>
            <person name="Pereira G.A.G."/>
            <person name="Pereira H.A. Jr."/>
            <person name="Pesquero J.B."/>
            <person name="Quaggio R.B."/>
            <person name="Roberto P.G."/>
            <person name="Rodrigues V."/>
            <person name="de Rosa A.J.M."/>
            <person name="de Rosa V.E. Jr."/>
            <person name="de Sa R.G."/>
            <person name="Santelli R.V."/>
            <person name="Sawasaki H.E."/>
            <person name="da Silva A.C.R."/>
            <person name="da Silva A.M."/>
            <person name="da Silva F.R."/>
            <person name="Silva W.A. Jr."/>
            <person name="da Silveira J.F."/>
            <person name="Silvestri M.L.Z."/>
            <person name="Siqueira W.J."/>
            <person name="de Souza A.A."/>
            <person name="de Souza A.P."/>
            <person name="Terenzi M.F."/>
            <person name="Truffi D."/>
            <person name="Tsai S.M."/>
            <person name="Tsuhako M.H."/>
            <person name="Vallada H."/>
            <person name="Van Sluys M.A."/>
            <person name="Verjovski-Almeida S."/>
            <person name="Vettore A.L."/>
            <person name="Zago M.A."/>
            <person name="Zatz M."/>
            <person name="Meidanis J."/>
            <person name="Setubal J.C."/>
        </authorList>
    </citation>
    <scope>NUCLEOTIDE SEQUENCE [LARGE SCALE GENOMIC DNA]</scope>
    <source>
        <strain>9a5c</strain>
    </source>
</reference>
<proteinExistence type="inferred from homology"/>
<comment type="function">
    <text evidence="1">Catalyzes the interconversion of methylthioribose-1-phosphate (MTR-1-P) into methylthioribulose-1-phosphate (MTRu-1-P).</text>
</comment>
<comment type="catalytic activity">
    <reaction evidence="1">
        <text>5-(methylsulfanyl)-alpha-D-ribose 1-phosphate = 5-(methylsulfanyl)-D-ribulose 1-phosphate</text>
        <dbReference type="Rhea" id="RHEA:19989"/>
        <dbReference type="ChEBI" id="CHEBI:58533"/>
        <dbReference type="ChEBI" id="CHEBI:58548"/>
        <dbReference type="EC" id="5.3.1.23"/>
    </reaction>
</comment>
<comment type="pathway">
    <text evidence="1">Amino-acid biosynthesis; L-methionine biosynthesis via salvage pathway; L-methionine from S-methyl-5-thio-alpha-D-ribose 1-phosphate: step 1/6.</text>
</comment>
<comment type="similarity">
    <text evidence="2">Belongs to the eIF-2B alpha/beta/delta subunits family. MtnA subfamily.</text>
</comment>
<evidence type="ECO:0000255" key="1">
    <source>
        <dbReference type="HAMAP-Rule" id="MF_01678"/>
    </source>
</evidence>
<evidence type="ECO:0000305" key="2"/>
<gene>
    <name evidence="1" type="primary">mtnA</name>
    <name type="ordered locus">XF_2553</name>
</gene>
<dbReference type="EC" id="5.3.1.23" evidence="1"/>
<dbReference type="EMBL" id="AE003849">
    <property type="protein sequence ID" value="AAF85350.1"/>
    <property type="molecule type" value="Genomic_DNA"/>
</dbReference>
<dbReference type="PIR" id="A82544">
    <property type="entry name" value="A82544"/>
</dbReference>
<dbReference type="RefSeq" id="WP_010894974.1">
    <property type="nucleotide sequence ID" value="NC_002488.3"/>
</dbReference>
<dbReference type="SMR" id="Q9PAG5"/>
<dbReference type="STRING" id="160492.XF_2553"/>
<dbReference type="KEGG" id="xfa:XF_2553"/>
<dbReference type="PATRIC" id="fig|160492.11.peg.2712"/>
<dbReference type="eggNOG" id="COG0182">
    <property type="taxonomic scope" value="Bacteria"/>
</dbReference>
<dbReference type="HOGENOM" id="CLU_016218_1_2_6"/>
<dbReference type="UniPathway" id="UPA00904">
    <property type="reaction ID" value="UER00874"/>
</dbReference>
<dbReference type="Proteomes" id="UP000000812">
    <property type="component" value="Chromosome"/>
</dbReference>
<dbReference type="GO" id="GO:0046523">
    <property type="term" value="F:S-methyl-5-thioribose-1-phosphate isomerase activity"/>
    <property type="evidence" value="ECO:0007669"/>
    <property type="project" value="UniProtKB-UniRule"/>
</dbReference>
<dbReference type="GO" id="GO:0019509">
    <property type="term" value="P:L-methionine salvage from methylthioadenosine"/>
    <property type="evidence" value="ECO:0007669"/>
    <property type="project" value="UniProtKB-UniRule"/>
</dbReference>
<dbReference type="FunFam" id="1.20.120.420:FF:000003">
    <property type="entry name" value="Methylthioribose-1-phosphate isomerase"/>
    <property type="match status" value="1"/>
</dbReference>
<dbReference type="FunFam" id="3.40.50.10470:FF:000006">
    <property type="entry name" value="Methylthioribose-1-phosphate isomerase"/>
    <property type="match status" value="1"/>
</dbReference>
<dbReference type="Gene3D" id="1.20.120.420">
    <property type="entry name" value="translation initiation factor eif-2b, domain 1"/>
    <property type="match status" value="1"/>
</dbReference>
<dbReference type="Gene3D" id="3.40.50.10470">
    <property type="entry name" value="Translation initiation factor eif-2b, domain 2"/>
    <property type="match status" value="1"/>
</dbReference>
<dbReference type="HAMAP" id="MF_01678">
    <property type="entry name" value="Salvage_MtnA"/>
    <property type="match status" value="1"/>
</dbReference>
<dbReference type="InterPro" id="IPR000649">
    <property type="entry name" value="IF-2B-related"/>
</dbReference>
<dbReference type="InterPro" id="IPR005251">
    <property type="entry name" value="IF-M1Pi"/>
</dbReference>
<dbReference type="InterPro" id="IPR042529">
    <property type="entry name" value="IF_2B-like_C"/>
</dbReference>
<dbReference type="InterPro" id="IPR011559">
    <property type="entry name" value="Initiation_fac_2B_a/b/d"/>
</dbReference>
<dbReference type="InterPro" id="IPR027363">
    <property type="entry name" value="M1Pi_N"/>
</dbReference>
<dbReference type="InterPro" id="IPR037171">
    <property type="entry name" value="NagB/RpiA_transferase-like"/>
</dbReference>
<dbReference type="NCBIfam" id="TIGR00524">
    <property type="entry name" value="eIF-2B_rel"/>
    <property type="match status" value="1"/>
</dbReference>
<dbReference type="NCBIfam" id="NF004326">
    <property type="entry name" value="PRK05720.1"/>
    <property type="match status" value="1"/>
</dbReference>
<dbReference type="NCBIfam" id="TIGR00512">
    <property type="entry name" value="salvage_mtnA"/>
    <property type="match status" value="1"/>
</dbReference>
<dbReference type="PANTHER" id="PTHR43475">
    <property type="entry name" value="METHYLTHIORIBOSE-1-PHOSPHATE ISOMERASE"/>
    <property type="match status" value="1"/>
</dbReference>
<dbReference type="PANTHER" id="PTHR43475:SF1">
    <property type="entry name" value="METHYLTHIORIBOSE-1-PHOSPHATE ISOMERASE"/>
    <property type="match status" value="1"/>
</dbReference>
<dbReference type="Pfam" id="PF01008">
    <property type="entry name" value="IF-2B"/>
    <property type="match status" value="1"/>
</dbReference>
<dbReference type="SUPFAM" id="SSF100950">
    <property type="entry name" value="NagB/RpiA/CoA transferase-like"/>
    <property type="match status" value="1"/>
</dbReference>
<feature type="chain" id="PRO_0000156100" description="Methylthioribose-1-phosphate isomerase">
    <location>
        <begin position="1"/>
        <end position="354"/>
    </location>
</feature>
<feature type="active site" description="Proton donor" evidence="1">
    <location>
        <position position="245"/>
    </location>
</feature>
<feature type="binding site" evidence="1">
    <location>
        <begin position="58"/>
        <end position="60"/>
    </location>
    <ligand>
        <name>substrate</name>
    </ligand>
</feature>
<feature type="binding site" evidence="1">
    <location>
        <position position="101"/>
    </location>
    <ligand>
        <name>substrate</name>
    </ligand>
</feature>
<feature type="binding site" evidence="1">
    <location>
        <position position="204"/>
    </location>
    <ligand>
        <name>substrate</name>
    </ligand>
</feature>
<feature type="binding site" evidence="1">
    <location>
        <begin position="255"/>
        <end position="256"/>
    </location>
    <ligand>
        <name>substrate</name>
    </ligand>
</feature>
<feature type="site" description="Transition state stabilizer" evidence="1">
    <location>
        <position position="165"/>
    </location>
</feature>
<name>MTNA_XYLFA</name>
<protein>
    <recommendedName>
        <fullName evidence="1">Methylthioribose-1-phosphate isomerase</fullName>
        <shortName evidence="1">M1Pi</shortName>
        <shortName evidence="1">MTR-1-P isomerase</shortName>
        <ecNumber evidence="1">5.3.1.23</ecNumber>
    </recommendedName>
    <alternativeName>
        <fullName evidence="1">S-methyl-5-thioribose-1-phosphate isomerase</fullName>
    </alternativeName>
</protein>
<accession>Q9PAG5</accession>
<organism>
    <name type="scientific">Xylella fastidiosa (strain 9a5c)</name>
    <dbReference type="NCBI Taxonomy" id="160492"/>
    <lineage>
        <taxon>Bacteria</taxon>
        <taxon>Pseudomonadati</taxon>
        <taxon>Pseudomonadota</taxon>
        <taxon>Gammaproteobacteria</taxon>
        <taxon>Lysobacterales</taxon>
        <taxon>Lysobacteraceae</taxon>
        <taxon>Xylella</taxon>
    </lineage>
</organism>
<sequence length="354" mass="37845">MHHPLPPDDTLYDQVRPILWTGHFLKLLDQRKLPFVVEYVECHSSEDVTQAIRALIVRGAPAIGIVAGWGAVLAAREIEAVDGIEALRKLEPALQRLHAARPTAVNLAWVLARMRRTLSAAHADWRQAMAREAESIAREDLTANRCMGAYGAALIPIGSGVLTHCNTGSLATAGFGTALGVIRAGIAQGRIARVFAGETRPWLQGARLTVWELQQDGIDVTLIADSAAAHLMKSGQVQWVIVGADRICANGDAANKIGTYQLAITARHHGVKFMVVASAATVDMDTTAGEAIEIEQRDPEELLGVSGVRTVAEGIAAWNPVFDVTPGALIDAIVTERGVIQSPDAAQMRATFGN</sequence>